<name>DXS_LAWIP</name>
<keyword id="KW-0414">Isoprene biosynthesis</keyword>
<keyword id="KW-0460">Magnesium</keyword>
<keyword id="KW-0479">Metal-binding</keyword>
<keyword id="KW-1185">Reference proteome</keyword>
<keyword id="KW-0784">Thiamine biosynthesis</keyword>
<keyword id="KW-0786">Thiamine pyrophosphate</keyword>
<keyword id="KW-0808">Transferase</keyword>
<evidence type="ECO:0000255" key="1">
    <source>
        <dbReference type="HAMAP-Rule" id="MF_00315"/>
    </source>
</evidence>
<proteinExistence type="inferred from homology"/>
<reference key="1">
    <citation type="submission" date="2005-11" db="EMBL/GenBank/DDBJ databases">
        <title>The complete genome sequence of Lawsonia intracellularis: the causative agent of proliferative enteropathy.</title>
        <authorList>
            <person name="Kaur K."/>
            <person name="Zhang Q."/>
            <person name="Beckler D."/>
            <person name="Munir S."/>
            <person name="Li L."/>
            <person name="Kinsley K."/>
            <person name="Herron L."/>
            <person name="Peterson A."/>
            <person name="May B."/>
            <person name="Singh S."/>
            <person name="Gebhart C."/>
            <person name="Kapur V."/>
        </authorList>
    </citation>
    <scope>NUCLEOTIDE SEQUENCE [LARGE SCALE GENOMIC DNA]</scope>
    <source>
        <strain>PHE/MN1-00</strain>
    </source>
</reference>
<comment type="function">
    <text evidence="1">Catalyzes the acyloin condensation reaction between C atoms 2 and 3 of pyruvate and glyceraldehyde 3-phosphate to yield 1-deoxy-D-xylulose-5-phosphate (DXP).</text>
</comment>
<comment type="catalytic activity">
    <reaction evidence="1">
        <text>D-glyceraldehyde 3-phosphate + pyruvate + H(+) = 1-deoxy-D-xylulose 5-phosphate + CO2</text>
        <dbReference type="Rhea" id="RHEA:12605"/>
        <dbReference type="ChEBI" id="CHEBI:15361"/>
        <dbReference type="ChEBI" id="CHEBI:15378"/>
        <dbReference type="ChEBI" id="CHEBI:16526"/>
        <dbReference type="ChEBI" id="CHEBI:57792"/>
        <dbReference type="ChEBI" id="CHEBI:59776"/>
        <dbReference type="EC" id="2.2.1.7"/>
    </reaction>
</comment>
<comment type="cofactor">
    <cofactor evidence="1">
        <name>Mg(2+)</name>
        <dbReference type="ChEBI" id="CHEBI:18420"/>
    </cofactor>
    <text evidence="1">Binds 1 Mg(2+) ion per subunit.</text>
</comment>
<comment type="cofactor">
    <cofactor evidence="1">
        <name>thiamine diphosphate</name>
        <dbReference type="ChEBI" id="CHEBI:58937"/>
    </cofactor>
    <text evidence="1">Binds 1 thiamine pyrophosphate per subunit.</text>
</comment>
<comment type="pathway">
    <text evidence="1">Metabolic intermediate biosynthesis; 1-deoxy-D-xylulose 5-phosphate biosynthesis; 1-deoxy-D-xylulose 5-phosphate from D-glyceraldehyde 3-phosphate and pyruvate: step 1/1.</text>
</comment>
<comment type="subunit">
    <text evidence="1">Homodimer.</text>
</comment>
<comment type="similarity">
    <text evidence="1">Belongs to the transketolase family. DXPS subfamily.</text>
</comment>
<dbReference type="EC" id="2.2.1.7" evidence="1"/>
<dbReference type="EMBL" id="AM180252">
    <property type="protein sequence ID" value="CAJ54463.1"/>
    <property type="molecule type" value="Genomic_DNA"/>
</dbReference>
<dbReference type="RefSeq" id="WP_011526493.1">
    <property type="nucleotide sequence ID" value="NC_008011.1"/>
</dbReference>
<dbReference type="SMR" id="Q1MRB3"/>
<dbReference type="STRING" id="363253.LI0408"/>
<dbReference type="KEGG" id="lip:LI0408"/>
<dbReference type="eggNOG" id="COG1154">
    <property type="taxonomic scope" value="Bacteria"/>
</dbReference>
<dbReference type="HOGENOM" id="CLU_009227_1_4_7"/>
<dbReference type="OrthoDB" id="9803371at2"/>
<dbReference type="UniPathway" id="UPA00064">
    <property type="reaction ID" value="UER00091"/>
</dbReference>
<dbReference type="Proteomes" id="UP000002430">
    <property type="component" value="Chromosome"/>
</dbReference>
<dbReference type="GO" id="GO:0005829">
    <property type="term" value="C:cytosol"/>
    <property type="evidence" value="ECO:0007669"/>
    <property type="project" value="TreeGrafter"/>
</dbReference>
<dbReference type="GO" id="GO:0008661">
    <property type="term" value="F:1-deoxy-D-xylulose-5-phosphate synthase activity"/>
    <property type="evidence" value="ECO:0007669"/>
    <property type="project" value="UniProtKB-UniRule"/>
</dbReference>
<dbReference type="GO" id="GO:0000287">
    <property type="term" value="F:magnesium ion binding"/>
    <property type="evidence" value="ECO:0007669"/>
    <property type="project" value="UniProtKB-UniRule"/>
</dbReference>
<dbReference type="GO" id="GO:0030976">
    <property type="term" value="F:thiamine pyrophosphate binding"/>
    <property type="evidence" value="ECO:0007669"/>
    <property type="project" value="UniProtKB-UniRule"/>
</dbReference>
<dbReference type="GO" id="GO:0052865">
    <property type="term" value="P:1-deoxy-D-xylulose 5-phosphate biosynthetic process"/>
    <property type="evidence" value="ECO:0007669"/>
    <property type="project" value="UniProtKB-UniPathway"/>
</dbReference>
<dbReference type="GO" id="GO:0019288">
    <property type="term" value="P:isopentenyl diphosphate biosynthetic process, methylerythritol 4-phosphate pathway"/>
    <property type="evidence" value="ECO:0007669"/>
    <property type="project" value="TreeGrafter"/>
</dbReference>
<dbReference type="GO" id="GO:0016114">
    <property type="term" value="P:terpenoid biosynthetic process"/>
    <property type="evidence" value="ECO:0007669"/>
    <property type="project" value="UniProtKB-UniRule"/>
</dbReference>
<dbReference type="GO" id="GO:0009228">
    <property type="term" value="P:thiamine biosynthetic process"/>
    <property type="evidence" value="ECO:0007669"/>
    <property type="project" value="UniProtKB-UniRule"/>
</dbReference>
<dbReference type="CDD" id="cd02007">
    <property type="entry name" value="TPP_DXS"/>
    <property type="match status" value="1"/>
</dbReference>
<dbReference type="CDD" id="cd07033">
    <property type="entry name" value="TPP_PYR_DXS_TK_like"/>
    <property type="match status" value="1"/>
</dbReference>
<dbReference type="FunFam" id="3.40.50.970:FF:000005">
    <property type="entry name" value="1-deoxy-D-xylulose-5-phosphate synthase"/>
    <property type="match status" value="1"/>
</dbReference>
<dbReference type="Gene3D" id="3.40.50.920">
    <property type="match status" value="1"/>
</dbReference>
<dbReference type="Gene3D" id="3.40.50.970">
    <property type="match status" value="2"/>
</dbReference>
<dbReference type="HAMAP" id="MF_00315">
    <property type="entry name" value="DXP_synth"/>
    <property type="match status" value="1"/>
</dbReference>
<dbReference type="InterPro" id="IPR005477">
    <property type="entry name" value="Dxylulose-5-P_synthase"/>
</dbReference>
<dbReference type="InterPro" id="IPR029061">
    <property type="entry name" value="THDP-binding"/>
</dbReference>
<dbReference type="InterPro" id="IPR009014">
    <property type="entry name" value="Transketo_C/PFOR_II"/>
</dbReference>
<dbReference type="InterPro" id="IPR005475">
    <property type="entry name" value="Transketolase-like_Pyr-bd"/>
</dbReference>
<dbReference type="InterPro" id="IPR020826">
    <property type="entry name" value="Transketolase_BS"/>
</dbReference>
<dbReference type="InterPro" id="IPR033248">
    <property type="entry name" value="Transketolase_C"/>
</dbReference>
<dbReference type="InterPro" id="IPR049557">
    <property type="entry name" value="Transketolase_CS"/>
</dbReference>
<dbReference type="NCBIfam" id="TIGR00204">
    <property type="entry name" value="dxs"/>
    <property type="match status" value="1"/>
</dbReference>
<dbReference type="NCBIfam" id="NF003933">
    <property type="entry name" value="PRK05444.2-2"/>
    <property type="match status" value="1"/>
</dbReference>
<dbReference type="PANTHER" id="PTHR43322">
    <property type="entry name" value="1-D-DEOXYXYLULOSE 5-PHOSPHATE SYNTHASE-RELATED"/>
    <property type="match status" value="1"/>
</dbReference>
<dbReference type="PANTHER" id="PTHR43322:SF5">
    <property type="entry name" value="1-DEOXY-D-XYLULOSE-5-PHOSPHATE SYNTHASE, CHLOROPLASTIC"/>
    <property type="match status" value="1"/>
</dbReference>
<dbReference type="Pfam" id="PF13292">
    <property type="entry name" value="DXP_synthase_N"/>
    <property type="match status" value="1"/>
</dbReference>
<dbReference type="Pfam" id="PF02779">
    <property type="entry name" value="Transket_pyr"/>
    <property type="match status" value="1"/>
</dbReference>
<dbReference type="Pfam" id="PF02780">
    <property type="entry name" value="Transketolase_C"/>
    <property type="match status" value="1"/>
</dbReference>
<dbReference type="SMART" id="SM00861">
    <property type="entry name" value="Transket_pyr"/>
    <property type="match status" value="1"/>
</dbReference>
<dbReference type="SUPFAM" id="SSF52518">
    <property type="entry name" value="Thiamin diphosphate-binding fold (THDP-binding)"/>
    <property type="match status" value="2"/>
</dbReference>
<dbReference type="SUPFAM" id="SSF52922">
    <property type="entry name" value="TK C-terminal domain-like"/>
    <property type="match status" value="1"/>
</dbReference>
<dbReference type="PROSITE" id="PS00801">
    <property type="entry name" value="TRANSKETOLASE_1"/>
    <property type="match status" value="1"/>
</dbReference>
<dbReference type="PROSITE" id="PS00802">
    <property type="entry name" value="TRANSKETOLASE_2"/>
    <property type="match status" value="1"/>
</dbReference>
<feature type="chain" id="PRO_0000256433" description="1-deoxy-D-xylulose-5-phosphate synthase">
    <location>
        <begin position="1"/>
        <end position="637"/>
    </location>
</feature>
<feature type="binding site" evidence="1">
    <location>
        <position position="82"/>
    </location>
    <ligand>
        <name>thiamine diphosphate</name>
        <dbReference type="ChEBI" id="CHEBI:58937"/>
    </ligand>
</feature>
<feature type="binding site" evidence="1">
    <location>
        <begin position="123"/>
        <end position="125"/>
    </location>
    <ligand>
        <name>thiamine diphosphate</name>
        <dbReference type="ChEBI" id="CHEBI:58937"/>
    </ligand>
</feature>
<feature type="binding site" evidence="1">
    <location>
        <position position="154"/>
    </location>
    <ligand>
        <name>Mg(2+)</name>
        <dbReference type="ChEBI" id="CHEBI:18420"/>
    </ligand>
</feature>
<feature type="binding site" evidence="1">
    <location>
        <begin position="155"/>
        <end position="156"/>
    </location>
    <ligand>
        <name>thiamine diphosphate</name>
        <dbReference type="ChEBI" id="CHEBI:58937"/>
    </ligand>
</feature>
<feature type="binding site" evidence="1">
    <location>
        <position position="183"/>
    </location>
    <ligand>
        <name>Mg(2+)</name>
        <dbReference type="ChEBI" id="CHEBI:18420"/>
    </ligand>
</feature>
<feature type="binding site" evidence="1">
    <location>
        <position position="183"/>
    </location>
    <ligand>
        <name>thiamine diphosphate</name>
        <dbReference type="ChEBI" id="CHEBI:58937"/>
    </ligand>
</feature>
<feature type="binding site" evidence="1">
    <location>
        <position position="295"/>
    </location>
    <ligand>
        <name>thiamine diphosphate</name>
        <dbReference type="ChEBI" id="CHEBI:58937"/>
    </ligand>
</feature>
<feature type="binding site" evidence="1">
    <location>
        <position position="378"/>
    </location>
    <ligand>
        <name>thiamine diphosphate</name>
        <dbReference type="ChEBI" id="CHEBI:58937"/>
    </ligand>
</feature>
<gene>
    <name evidence="1" type="primary">dxs</name>
    <name type="ordered locus">LI0408</name>
</gene>
<accession>Q1MRB3</accession>
<protein>
    <recommendedName>
        <fullName evidence="1">1-deoxy-D-xylulose-5-phosphate synthase</fullName>
        <ecNumber evidence="1">2.2.1.7</ecNumber>
    </recommendedName>
    <alternativeName>
        <fullName evidence="1">1-deoxyxylulose-5-phosphate synthase</fullName>
        <shortName evidence="1">DXP synthase</shortName>
        <shortName evidence="1">DXPS</shortName>
    </alternativeName>
</protein>
<organism>
    <name type="scientific">Lawsonia intracellularis (strain PHE/MN1-00)</name>
    <dbReference type="NCBI Taxonomy" id="363253"/>
    <lineage>
        <taxon>Bacteria</taxon>
        <taxon>Pseudomonadati</taxon>
        <taxon>Thermodesulfobacteriota</taxon>
        <taxon>Desulfovibrionia</taxon>
        <taxon>Desulfovibrionales</taxon>
        <taxon>Desulfovibrionaceae</taxon>
        <taxon>Lawsonia</taxon>
    </lineage>
</organism>
<sequence length="637" mass="69548">MTHPPDTIVKSILSHISNPCDIQKLSLQDKLTLAEELRSIIIKTVSNNGGHLAPSLGVIELTLALLATFNPAEDKLLWDVGHQTYAWKLLTGRAHNFSTLRKLNGLSGFPKITESQYDHFGAGHAATSISAALGMAMARDLQGLKHHVIAIIGDGSLTAGMAFEGLNQAGAMGRRLIVVLNDNEMSISKNVGALSLFLSRNMERGWVRRVRHEIKDWLKSIPSIGDEVAEYASRTHRSLKTVFTPGILFEAFRFNYIGPVNGHDIESIEKHLAMAASIDDQPVLLHVLTKKGKGYEPAEKNPASYHGLGAFDIQTGIPKSNSQNSPPTYTEVFGKTLCELAEKDKRIVTITAAMASGTGTSLFKAKFPTHFTDVGICEQHAVTFAAGLASQGYKPFVAIYSTFAQRAYDQIIHDVCIQKLPVTFCLDRAGIVGEDGATHHGAFDISFLRCIPNISILAPRDEAELQSAIYTALSFNSPLAIRYPKGNGVGVTLPNESTPLPFEGELLKEGHDAIIIAIGSMVMPAYSAAQQLQEEKNLSIAVFDSRWISPLPQHQLIELANTFNNILLIEENALAGGFSSAVVELFADNQCLHGQRIQRIGIPNYFIDHGSQKELKQCLLLTVDGIKKMLLQMLQPE</sequence>